<sequence>MISRSIFSKSVSLQRSQNRSFLLTAASAVFGSMIFNENNQLASKMERGELHYDDPNASLNEKKVSPASNKYFSRRESEYPGHVPLYGIEKFMMFIGSGLGSFFHPENNANIVALGESTAIEPVLRKLQRQMLSDPVGRQILREKPRMTSTSLNLDHLRALPKNTLGHTYVSWLDREGVSPDTRVPVRFIDNEELAYIYQRYRECHDFYHAITGLPIIIEGEIAVKVLEFMNMGILMPGLGALLAPLRLKPSQRERLYSIYYPWAFRSGLNAKPLINVYWEKSLEMDVNELRRSLGIEQPPDLRNLRKEYFAKLKKEKRI</sequence>
<proteinExistence type="inferred from homology"/>
<organism>
    <name type="scientific">Clavispora lusitaniae (strain ATCC 42720)</name>
    <name type="common">Yeast</name>
    <name type="synonym">Candida lusitaniae</name>
    <dbReference type="NCBI Taxonomy" id="306902"/>
    <lineage>
        <taxon>Eukaryota</taxon>
        <taxon>Fungi</taxon>
        <taxon>Dikarya</taxon>
        <taxon>Ascomycota</taxon>
        <taxon>Saccharomycotina</taxon>
        <taxon>Pichiomycetes</taxon>
        <taxon>Metschnikowiaceae</taxon>
        <taxon>Clavispora</taxon>
    </lineage>
</organism>
<feature type="transit peptide" description="Mitochondrion" evidence="1">
    <location>
        <begin position="1"/>
        <end position="28"/>
    </location>
</feature>
<feature type="chain" id="PRO_0000388108" description="Ubiquinone biosynthesis protein COQ4, mitochondrial">
    <location>
        <begin position="29"/>
        <end position="319"/>
    </location>
</feature>
<feature type="binding site" evidence="1">
    <location>
        <position position="205"/>
    </location>
    <ligand>
        <name>Zn(2+)</name>
        <dbReference type="ChEBI" id="CHEBI:29105"/>
    </ligand>
</feature>
<feature type="binding site" evidence="1">
    <location>
        <position position="206"/>
    </location>
    <ligand>
        <name>Zn(2+)</name>
        <dbReference type="ChEBI" id="CHEBI:29105"/>
    </ligand>
</feature>
<feature type="binding site" evidence="1">
    <location>
        <position position="209"/>
    </location>
    <ligand>
        <name>Zn(2+)</name>
        <dbReference type="ChEBI" id="CHEBI:29105"/>
    </ligand>
</feature>
<feature type="binding site" evidence="1">
    <location>
        <position position="221"/>
    </location>
    <ligand>
        <name>Zn(2+)</name>
        <dbReference type="ChEBI" id="CHEBI:29105"/>
    </ligand>
</feature>
<name>COQ4_CLAL4</name>
<evidence type="ECO:0000255" key="1">
    <source>
        <dbReference type="HAMAP-Rule" id="MF_03111"/>
    </source>
</evidence>
<keyword id="KW-0456">Lyase</keyword>
<keyword id="KW-0472">Membrane</keyword>
<keyword id="KW-0479">Metal-binding</keyword>
<keyword id="KW-0496">Mitochondrion</keyword>
<keyword id="KW-0999">Mitochondrion inner membrane</keyword>
<keyword id="KW-1185">Reference proteome</keyword>
<keyword id="KW-0809">Transit peptide</keyword>
<keyword id="KW-0831">Ubiquinone biosynthesis</keyword>
<keyword id="KW-0862">Zinc</keyword>
<comment type="function">
    <text evidence="1">Lyase that catalyzes the C1-decarboxylation of 4-hydroxy-3-methoxy-5-(all-trans-polyprenyl)benzoic acid into 2-methoxy-6-(all-trans-polyprenyl)phenol during ubiquinone biosynthesis.</text>
</comment>
<comment type="catalytic activity">
    <reaction evidence="1">
        <text>a 4-hydroxy-3-methoxy-5-(all-trans-polyprenyl)benzoate + H(+) = a 2-methoxy-6-(all-trans-polyprenyl)phenol + CO2</text>
        <dbReference type="Rhea" id="RHEA:81179"/>
        <dbReference type="Rhea" id="RHEA-COMP:9551"/>
        <dbReference type="Rhea" id="RHEA-COMP:10931"/>
        <dbReference type="ChEBI" id="CHEBI:15378"/>
        <dbReference type="ChEBI" id="CHEBI:16526"/>
        <dbReference type="ChEBI" id="CHEBI:62731"/>
        <dbReference type="ChEBI" id="CHEBI:84443"/>
        <dbReference type="EC" id="4.1.1.130"/>
    </reaction>
</comment>
<comment type="cofactor">
    <cofactor evidence="1">
        <name>Zn(2+)</name>
        <dbReference type="ChEBI" id="CHEBI:29105"/>
    </cofactor>
</comment>
<comment type="pathway">
    <text evidence="1">Cofactor biosynthesis; ubiquinone biosynthesis.</text>
</comment>
<comment type="subunit">
    <text evidence="1">Component of a multi-subunit COQ enzyme complex, composed of at least COQ3, COQ4, COQ5, COQ6, COQ7 and COQ9.</text>
</comment>
<comment type="subcellular location">
    <subcellularLocation>
        <location evidence="1">Mitochondrion inner membrane</location>
        <topology evidence="1">Peripheral membrane protein</topology>
        <orientation evidence="1">Matrix side</orientation>
    </subcellularLocation>
</comment>
<comment type="similarity">
    <text evidence="1">Belongs to the COQ4 family.</text>
</comment>
<reference key="1">
    <citation type="journal article" date="2009" name="Nature">
        <title>Evolution of pathogenicity and sexual reproduction in eight Candida genomes.</title>
        <authorList>
            <person name="Butler G."/>
            <person name="Rasmussen M.D."/>
            <person name="Lin M.F."/>
            <person name="Santos M.A.S."/>
            <person name="Sakthikumar S."/>
            <person name="Munro C.A."/>
            <person name="Rheinbay E."/>
            <person name="Grabherr M."/>
            <person name="Forche A."/>
            <person name="Reedy J.L."/>
            <person name="Agrafioti I."/>
            <person name="Arnaud M.B."/>
            <person name="Bates S."/>
            <person name="Brown A.J.P."/>
            <person name="Brunke S."/>
            <person name="Costanzo M.C."/>
            <person name="Fitzpatrick D.A."/>
            <person name="de Groot P.W.J."/>
            <person name="Harris D."/>
            <person name="Hoyer L.L."/>
            <person name="Hube B."/>
            <person name="Klis F.M."/>
            <person name="Kodira C."/>
            <person name="Lennard N."/>
            <person name="Logue M.E."/>
            <person name="Martin R."/>
            <person name="Neiman A.M."/>
            <person name="Nikolaou E."/>
            <person name="Quail M.A."/>
            <person name="Quinn J."/>
            <person name="Santos M.C."/>
            <person name="Schmitzberger F.F."/>
            <person name="Sherlock G."/>
            <person name="Shah P."/>
            <person name="Silverstein K.A.T."/>
            <person name="Skrzypek M.S."/>
            <person name="Soll D."/>
            <person name="Staggs R."/>
            <person name="Stansfield I."/>
            <person name="Stumpf M.P.H."/>
            <person name="Sudbery P.E."/>
            <person name="Srikantha T."/>
            <person name="Zeng Q."/>
            <person name="Berman J."/>
            <person name="Berriman M."/>
            <person name="Heitman J."/>
            <person name="Gow N.A.R."/>
            <person name="Lorenz M.C."/>
            <person name="Birren B.W."/>
            <person name="Kellis M."/>
            <person name="Cuomo C.A."/>
        </authorList>
    </citation>
    <scope>NUCLEOTIDE SEQUENCE [LARGE SCALE GENOMIC DNA]</scope>
    <source>
        <strain>ATCC 42720</strain>
    </source>
</reference>
<accession>C4Y5Y7</accession>
<gene>
    <name evidence="1" type="primary">COQ4</name>
    <name type="ORF">CLUG_03571</name>
</gene>
<dbReference type="EC" id="4.1.1.130" evidence="1"/>
<dbReference type="EMBL" id="CH408079">
    <property type="protein sequence ID" value="EEQ39443.1"/>
    <property type="molecule type" value="Genomic_DNA"/>
</dbReference>
<dbReference type="RefSeq" id="XP_002616330.1">
    <property type="nucleotide sequence ID" value="XM_002616284.1"/>
</dbReference>
<dbReference type="SMR" id="C4Y5Y7"/>
<dbReference type="FunCoup" id="C4Y5Y7">
    <property type="interactions" value="520"/>
</dbReference>
<dbReference type="STRING" id="306902.C4Y5Y7"/>
<dbReference type="GeneID" id="8496944"/>
<dbReference type="KEGG" id="clu:CLUG_03571"/>
<dbReference type="VEuPathDB" id="FungiDB:CLUG_03571"/>
<dbReference type="HOGENOM" id="CLU_061241_0_2_1"/>
<dbReference type="InParanoid" id="C4Y5Y7"/>
<dbReference type="OMA" id="YYERHFH"/>
<dbReference type="OrthoDB" id="83888at4891"/>
<dbReference type="UniPathway" id="UPA00232"/>
<dbReference type="Proteomes" id="UP000007703">
    <property type="component" value="Unassembled WGS sequence"/>
</dbReference>
<dbReference type="GO" id="GO:0031314">
    <property type="term" value="C:extrinsic component of mitochondrial inner membrane"/>
    <property type="evidence" value="ECO:0007669"/>
    <property type="project" value="UniProtKB-UniRule"/>
</dbReference>
<dbReference type="GO" id="GO:0006744">
    <property type="term" value="P:ubiquinone biosynthetic process"/>
    <property type="evidence" value="ECO:0007669"/>
    <property type="project" value="UniProtKB-UniRule"/>
</dbReference>
<dbReference type="HAMAP" id="MF_03111">
    <property type="entry name" value="Coq4"/>
    <property type="match status" value="1"/>
</dbReference>
<dbReference type="InterPro" id="IPR007715">
    <property type="entry name" value="Coq4"/>
</dbReference>
<dbReference type="InterPro" id="IPR027540">
    <property type="entry name" value="Coq4_euk"/>
</dbReference>
<dbReference type="PANTHER" id="PTHR12922">
    <property type="entry name" value="UBIQUINONE BIOSYNTHESIS PROTEIN"/>
    <property type="match status" value="1"/>
</dbReference>
<dbReference type="PANTHER" id="PTHR12922:SF7">
    <property type="entry name" value="UBIQUINONE BIOSYNTHESIS PROTEIN COQ4 HOMOLOG, MITOCHONDRIAL"/>
    <property type="match status" value="1"/>
</dbReference>
<dbReference type="Pfam" id="PF05019">
    <property type="entry name" value="Coq4"/>
    <property type="match status" value="1"/>
</dbReference>
<protein>
    <recommendedName>
        <fullName evidence="1">Ubiquinone biosynthesis protein COQ4, mitochondrial</fullName>
    </recommendedName>
    <alternativeName>
        <fullName>4-hydroxy-3-methoxy-5-polyprenylbenzoate decarboxylase</fullName>
        <ecNumber evidence="1">4.1.1.130</ecNumber>
    </alternativeName>
    <alternativeName>
        <fullName evidence="1">Coenzyme Q biosynthesis protein 4</fullName>
    </alternativeName>
</protein>